<sequence>MPYRSTEILSPGPADKAPLHRVTLTHDQRHLRRKLLHLENDDVVMLDLKEAVMLADGDLLALEGGGYIEVKAAEEALYEIRPRDRLHLIELAWHLGNRHLAAAIDEGRILIVRDPVIRAMLEGLGATVNEAVEPFHPLRGAYHGTGHHHHGHGHDPHHG</sequence>
<gene>
    <name evidence="1" type="primary">ureE</name>
    <name type="ordered locus">NGR_c24950</name>
</gene>
<keyword id="KW-0143">Chaperone</keyword>
<keyword id="KW-0963">Cytoplasm</keyword>
<keyword id="KW-0533">Nickel</keyword>
<keyword id="KW-1185">Reference proteome</keyword>
<accession>C3MGI0</accession>
<comment type="function">
    <text evidence="1">Involved in urease metallocenter assembly. Binds nickel. Probably functions as a nickel donor during metallocenter assembly.</text>
</comment>
<comment type="subcellular location">
    <subcellularLocation>
        <location evidence="1">Cytoplasm</location>
    </subcellularLocation>
</comment>
<comment type="similarity">
    <text evidence="1">Belongs to the UreE family.</text>
</comment>
<evidence type="ECO:0000255" key="1">
    <source>
        <dbReference type="HAMAP-Rule" id="MF_00822"/>
    </source>
</evidence>
<evidence type="ECO:0000256" key="2">
    <source>
        <dbReference type="SAM" id="MobiDB-lite"/>
    </source>
</evidence>
<organism>
    <name type="scientific">Sinorhizobium fredii (strain NBRC 101917 / NGR234)</name>
    <dbReference type="NCBI Taxonomy" id="394"/>
    <lineage>
        <taxon>Bacteria</taxon>
        <taxon>Pseudomonadati</taxon>
        <taxon>Pseudomonadota</taxon>
        <taxon>Alphaproteobacteria</taxon>
        <taxon>Hyphomicrobiales</taxon>
        <taxon>Rhizobiaceae</taxon>
        <taxon>Sinorhizobium/Ensifer group</taxon>
        <taxon>Sinorhizobium</taxon>
    </lineage>
</organism>
<feature type="chain" id="PRO_1000148717" description="Urease accessory protein UreE">
    <location>
        <begin position="1"/>
        <end position="159"/>
    </location>
</feature>
<feature type="region of interest" description="Disordered" evidence="2">
    <location>
        <begin position="140"/>
        <end position="159"/>
    </location>
</feature>
<name>UREE_SINFN</name>
<protein>
    <recommendedName>
        <fullName evidence="1">Urease accessory protein UreE</fullName>
    </recommendedName>
</protein>
<dbReference type="EMBL" id="CP001389">
    <property type="protein sequence ID" value="ACP26252.1"/>
    <property type="molecule type" value="Genomic_DNA"/>
</dbReference>
<dbReference type="RefSeq" id="WP_012709010.1">
    <property type="nucleotide sequence ID" value="NC_012587.1"/>
</dbReference>
<dbReference type="RefSeq" id="YP_002827005.1">
    <property type="nucleotide sequence ID" value="NC_012587.1"/>
</dbReference>
<dbReference type="SMR" id="C3MGI0"/>
<dbReference type="STRING" id="394.NGR_c24950"/>
<dbReference type="KEGG" id="rhi:NGR_c24950"/>
<dbReference type="PATRIC" id="fig|394.7.peg.5317"/>
<dbReference type="eggNOG" id="COG2371">
    <property type="taxonomic scope" value="Bacteria"/>
</dbReference>
<dbReference type="HOGENOM" id="CLU_093757_1_0_5"/>
<dbReference type="OrthoDB" id="9802215at2"/>
<dbReference type="Proteomes" id="UP000001054">
    <property type="component" value="Chromosome"/>
</dbReference>
<dbReference type="GO" id="GO:0005737">
    <property type="term" value="C:cytoplasm"/>
    <property type="evidence" value="ECO:0007669"/>
    <property type="project" value="UniProtKB-SubCell"/>
</dbReference>
<dbReference type="GO" id="GO:0016151">
    <property type="term" value="F:nickel cation binding"/>
    <property type="evidence" value="ECO:0007669"/>
    <property type="project" value="UniProtKB-UniRule"/>
</dbReference>
<dbReference type="GO" id="GO:0051082">
    <property type="term" value="F:unfolded protein binding"/>
    <property type="evidence" value="ECO:0007669"/>
    <property type="project" value="UniProtKB-UniRule"/>
</dbReference>
<dbReference type="GO" id="GO:0006457">
    <property type="term" value="P:protein folding"/>
    <property type="evidence" value="ECO:0007669"/>
    <property type="project" value="InterPro"/>
</dbReference>
<dbReference type="GO" id="GO:0065003">
    <property type="term" value="P:protein-containing complex assembly"/>
    <property type="evidence" value="ECO:0007669"/>
    <property type="project" value="InterPro"/>
</dbReference>
<dbReference type="GO" id="GO:0019627">
    <property type="term" value="P:urea metabolic process"/>
    <property type="evidence" value="ECO:0007669"/>
    <property type="project" value="InterPro"/>
</dbReference>
<dbReference type="CDD" id="cd00571">
    <property type="entry name" value="UreE"/>
    <property type="match status" value="1"/>
</dbReference>
<dbReference type="Gene3D" id="2.60.260.20">
    <property type="entry name" value="Urease metallochaperone UreE, N-terminal domain"/>
    <property type="match status" value="1"/>
</dbReference>
<dbReference type="Gene3D" id="3.30.70.790">
    <property type="entry name" value="UreE, C-terminal domain"/>
    <property type="match status" value="1"/>
</dbReference>
<dbReference type="HAMAP" id="MF_00822">
    <property type="entry name" value="UreE"/>
    <property type="match status" value="1"/>
</dbReference>
<dbReference type="InterPro" id="IPR012406">
    <property type="entry name" value="UreE"/>
</dbReference>
<dbReference type="InterPro" id="IPR007864">
    <property type="entry name" value="UreE_C_dom"/>
</dbReference>
<dbReference type="InterPro" id="IPR004029">
    <property type="entry name" value="UreE_N"/>
</dbReference>
<dbReference type="InterPro" id="IPR036118">
    <property type="entry name" value="UreE_N_sf"/>
</dbReference>
<dbReference type="NCBIfam" id="NF009760">
    <property type="entry name" value="PRK13261.2-6"/>
    <property type="match status" value="1"/>
</dbReference>
<dbReference type="Pfam" id="PF05194">
    <property type="entry name" value="UreE_C"/>
    <property type="match status" value="1"/>
</dbReference>
<dbReference type="Pfam" id="PF02814">
    <property type="entry name" value="UreE_N"/>
    <property type="match status" value="1"/>
</dbReference>
<dbReference type="PIRSF" id="PIRSF036402">
    <property type="entry name" value="Ureas_acces_UreE"/>
    <property type="match status" value="1"/>
</dbReference>
<dbReference type="SMART" id="SM00988">
    <property type="entry name" value="UreE_N"/>
    <property type="match status" value="1"/>
</dbReference>
<dbReference type="SUPFAM" id="SSF69737">
    <property type="entry name" value="Urease metallochaperone UreE, C-terminal domain"/>
    <property type="match status" value="1"/>
</dbReference>
<dbReference type="SUPFAM" id="SSF69287">
    <property type="entry name" value="Urease metallochaperone UreE, N-terminal domain"/>
    <property type="match status" value="1"/>
</dbReference>
<reference key="1">
    <citation type="journal article" date="2009" name="Appl. Environ. Microbiol.">
        <title>Rhizobium sp. strain NGR234 possesses a remarkable number of secretion systems.</title>
        <authorList>
            <person name="Schmeisser C."/>
            <person name="Liesegang H."/>
            <person name="Krysciak D."/>
            <person name="Bakkou N."/>
            <person name="Le Quere A."/>
            <person name="Wollherr A."/>
            <person name="Heinemeyer I."/>
            <person name="Morgenstern B."/>
            <person name="Pommerening-Roeser A."/>
            <person name="Flores M."/>
            <person name="Palacios R."/>
            <person name="Brenner S."/>
            <person name="Gottschalk G."/>
            <person name="Schmitz R.A."/>
            <person name="Broughton W.J."/>
            <person name="Perret X."/>
            <person name="Strittmatter A.W."/>
            <person name="Streit W.R."/>
        </authorList>
    </citation>
    <scope>NUCLEOTIDE SEQUENCE [LARGE SCALE GENOMIC DNA]</scope>
    <source>
        <strain>NBRC 101917 / NGR234</strain>
    </source>
</reference>
<proteinExistence type="inferred from homology"/>